<feature type="chain" id="PRO_0000340478" description="Urease accessory protein UreD">
    <location>
        <begin position="1"/>
        <end position="300"/>
    </location>
</feature>
<proteinExistence type="inferred from homology"/>
<reference key="1">
    <citation type="journal article" date="2006" name="Science">
        <title>Genomic islands and the ecology and evolution of Prochlorococcus.</title>
        <authorList>
            <person name="Coleman M.L."/>
            <person name="Sullivan M.B."/>
            <person name="Martiny A.C."/>
            <person name="Steglich C."/>
            <person name="Barry K."/>
            <person name="Delong E.F."/>
            <person name="Chisholm S.W."/>
        </authorList>
    </citation>
    <scope>NUCLEOTIDE SEQUENCE [LARGE SCALE GENOMIC DNA]</scope>
    <source>
        <strain>MIT 9312</strain>
    </source>
</reference>
<dbReference type="EMBL" id="CP000111">
    <property type="protein sequence ID" value="ABB49893.1"/>
    <property type="molecule type" value="Genomic_DNA"/>
</dbReference>
<dbReference type="RefSeq" id="WP_011376388.1">
    <property type="nucleotide sequence ID" value="NC_007577.1"/>
</dbReference>
<dbReference type="SMR" id="Q31B52"/>
<dbReference type="STRING" id="74546.PMT9312_0833"/>
<dbReference type="KEGG" id="pmi:PMT9312_0833"/>
<dbReference type="eggNOG" id="COG0829">
    <property type="taxonomic scope" value="Bacteria"/>
</dbReference>
<dbReference type="HOGENOM" id="CLU_056339_4_0_3"/>
<dbReference type="OrthoDB" id="9798842at2"/>
<dbReference type="Proteomes" id="UP000002715">
    <property type="component" value="Chromosome"/>
</dbReference>
<dbReference type="GO" id="GO:0005737">
    <property type="term" value="C:cytoplasm"/>
    <property type="evidence" value="ECO:0007669"/>
    <property type="project" value="UniProtKB-SubCell"/>
</dbReference>
<dbReference type="GO" id="GO:0016151">
    <property type="term" value="F:nickel cation binding"/>
    <property type="evidence" value="ECO:0007669"/>
    <property type="project" value="UniProtKB-UniRule"/>
</dbReference>
<dbReference type="HAMAP" id="MF_01384">
    <property type="entry name" value="UreD"/>
    <property type="match status" value="1"/>
</dbReference>
<dbReference type="InterPro" id="IPR002669">
    <property type="entry name" value="UreD"/>
</dbReference>
<dbReference type="PANTHER" id="PTHR33643">
    <property type="entry name" value="UREASE ACCESSORY PROTEIN D"/>
    <property type="match status" value="1"/>
</dbReference>
<dbReference type="PANTHER" id="PTHR33643:SF1">
    <property type="entry name" value="UREASE ACCESSORY PROTEIN D"/>
    <property type="match status" value="1"/>
</dbReference>
<dbReference type="Pfam" id="PF01774">
    <property type="entry name" value="UreD"/>
    <property type="match status" value="1"/>
</dbReference>
<name>URED_PROM9</name>
<evidence type="ECO:0000255" key="1">
    <source>
        <dbReference type="HAMAP-Rule" id="MF_01384"/>
    </source>
</evidence>
<sequence>MIKTSWEGNCFLNFFNNKASIGNVDKTIFKSKSTSPYKLLKSTHDEEGRCILPVLHTAGGLVGGDLLQFEVNLEKNSKVLLTTSSAQKVYGSVGRSKINPKGSFSKQKNYIKILDNSHLEYLPQETIIFANGLYDQKFKVFISENSSFLFTDLIRLGRSSSGESIESGVFRSKLEIIRNNDLYDDWEYVDQIELSKASYEAKSGMDYMPVFGSLIWVCEKDFSKLKINNLVGNIKKFFKESDNHLSIGILENGISVRFLGSSSQEARKCFFCIWKQIRSVCGFCEPKYQGVWPLQDSMNY</sequence>
<organism>
    <name type="scientific">Prochlorococcus marinus (strain MIT 9312)</name>
    <dbReference type="NCBI Taxonomy" id="74546"/>
    <lineage>
        <taxon>Bacteria</taxon>
        <taxon>Bacillati</taxon>
        <taxon>Cyanobacteriota</taxon>
        <taxon>Cyanophyceae</taxon>
        <taxon>Synechococcales</taxon>
        <taxon>Prochlorococcaceae</taxon>
        <taxon>Prochlorococcus</taxon>
    </lineage>
</organism>
<accession>Q31B52</accession>
<gene>
    <name evidence="1" type="primary">ureD</name>
    <name type="ordered locus">PMT9312_0833</name>
</gene>
<protein>
    <recommendedName>
        <fullName evidence="1">Urease accessory protein UreD</fullName>
    </recommendedName>
</protein>
<comment type="function">
    <text evidence="1">Required for maturation of urease via the functional incorporation of the urease nickel metallocenter.</text>
</comment>
<comment type="subunit">
    <text evidence="1">UreD, UreF and UreG form a complex that acts as a GTP-hydrolysis-dependent molecular chaperone, activating the urease apoprotein by helping to assemble the nickel containing metallocenter of UreC. The UreE protein probably delivers the nickel.</text>
</comment>
<comment type="subcellular location">
    <subcellularLocation>
        <location evidence="1">Cytoplasm</location>
    </subcellularLocation>
</comment>
<comment type="similarity">
    <text evidence="1">Belongs to the UreD family.</text>
</comment>
<keyword id="KW-0143">Chaperone</keyword>
<keyword id="KW-0963">Cytoplasm</keyword>
<keyword id="KW-0996">Nickel insertion</keyword>